<keyword id="KW-0028">Amino-acid biosynthesis</keyword>
<keyword id="KW-0368">Histidine biosynthesis</keyword>
<keyword id="KW-0378">Hydrolase</keyword>
<keyword id="KW-0486">Methionine biosynthesis</keyword>
<keyword id="KW-0511">Multifunctional enzyme</keyword>
<keyword id="KW-0521">NADP</keyword>
<keyword id="KW-0554">One-carbon metabolism</keyword>
<keyword id="KW-0560">Oxidoreductase</keyword>
<keyword id="KW-0658">Purine biosynthesis</keyword>
<proteinExistence type="inferred from homology"/>
<comment type="function">
    <text evidence="1">Catalyzes the oxidation of 5,10-methylenetetrahydrofolate to 5,10-methenyltetrahydrofolate and then the hydrolysis of 5,10-methenyltetrahydrofolate to 10-formyltetrahydrofolate.</text>
</comment>
<comment type="catalytic activity">
    <reaction evidence="1">
        <text>(6R)-5,10-methylene-5,6,7,8-tetrahydrofolate + NADP(+) = (6R)-5,10-methenyltetrahydrofolate + NADPH</text>
        <dbReference type="Rhea" id="RHEA:22812"/>
        <dbReference type="ChEBI" id="CHEBI:15636"/>
        <dbReference type="ChEBI" id="CHEBI:57455"/>
        <dbReference type="ChEBI" id="CHEBI:57783"/>
        <dbReference type="ChEBI" id="CHEBI:58349"/>
        <dbReference type="EC" id="1.5.1.5"/>
    </reaction>
</comment>
<comment type="catalytic activity">
    <reaction evidence="1">
        <text>(6R)-5,10-methenyltetrahydrofolate + H2O = (6R)-10-formyltetrahydrofolate + H(+)</text>
        <dbReference type="Rhea" id="RHEA:23700"/>
        <dbReference type="ChEBI" id="CHEBI:15377"/>
        <dbReference type="ChEBI" id="CHEBI:15378"/>
        <dbReference type="ChEBI" id="CHEBI:57455"/>
        <dbReference type="ChEBI" id="CHEBI:195366"/>
        <dbReference type="EC" id="3.5.4.9"/>
    </reaction>
</comment>
<comment type="pathway">
    <text evidence="1">One-carbon metabolism; tetrahydrofolate interconversion.</text>
</comment>
<comment type="subunit">
    <text evidence="1">Homodimer.</text>
</comment>
<comment type="similarity">
    <text evidence="1">Belongs to the tetrahydrofolate dehydrogenase/cyclohydrolase family.</text>
</comment>
<evidence type="ECO:0000255" key="1">
    <source>
        <dbReference type="HAMAP-Rule" id="MF_01576"/>
    </source>
</evidence>
<gene>
    <name evidence="1" type="primary">folD</name>
    <name type="ordered locus">CGSHiEE_02020</name>
</gene>
<reference key="1">
    <citation type="journal article" date="2007" name="Genome Biol.">
        <title>Characterization and modeling of the Haemophilus influenzae core and supragenomes based on the complete genomic sequences of Rd and 12 clinical nontypeable strains.</title>
        <authorList>
            <person name="Hogg J.S."/>
            <person name="Hu F.Z."/>
            <person name="Janto B."/>
            <person name="Boissy R."/>
            <person name="Hayes J."/>
            <person name="Keefe R."/>
            <person name="Post J.C."/>
            <person name="Ehrlich G.D."/>
        </authorList>
    </citation>
    <scope>NUCLEOTIDE SEQUENCE [LARGE SCALE GENOMIC DNA]</scope>
    <source>
        <strain>PittEE</strain>
    </source>
</reference>
<organism>
    <name type="scientific">Haemophilus influenzae (strain PittEE)</name>
    <dbReference type="NCBI Taxonomy" id="374930"/>
    <lineage>
        <taxon>Bacteria</taxon>
        <taxon>Pseudomonadati</taxon>
        <taxon>Pseudomonadota</taxon>
        <taxon>Gammaproteobacteria</taxon>
        <taxon>Pasteurellales</taxon>
        <taxon>Pasteurellaceae</taxon>
        <taxon>Haemophilus</taxon>
    </lineage>
</organism>
<dbReference type="EC" id="1.5.1.5" evidence="1"/>
<dbReference type="EC" id="3.5.4.9" evidence="1"/>
<dbReference type="EMBL" id="CP000671">
    <property type="protein sequence ID" value="ABQ97875.1"/>
    <property type="molecule type" value="Genomic_DNA"/>
</dbReference>
<dbReference type="SMR" id="A5UAS4"/>
<dbReference type="KEGG" id="hip:CGSHiEE_02020"/>
<dbReference type="HOGENOM" id="CLU_034045_2_1_6"/>
<dbReference type="UniPathway" id="UPA00193"/>
<dbReference type="GO" id="GO:0005829">
    <property type="term" value="C:cytosol"/>
    <property type="evidence" value="ECO:0007669"/>
    <property type="project" value="TreeGrafter"/>
</dbReference>
<dbReference type="GO" id="GO:0004477">
    <property type="term" value="F:methenyltetrahydrofolate cyclohydrolase activity"/>
    <property type="evidence" value="ECO:0007669"/>
    <property type="project" value="UniProtKB-UniRule"/>
</dbReference>
<dbReference type="GO" id="GO:0004488">
    <property type="term" value="F:methylenetetrahydrofolate dehydrogenase (NADP+) activity"/>
    <property type="evidence" value="ECO:0007669"/>
    <property type="project" value="UniProtKB-UniRule"/>
</dbReference>
<dbReference type="GO" id="GO:0000105">
    <property type="term" value="P:L-histidine biosynthetic process"/>
    <property type="evidence" value="ECO:0007669"/>
    <property type="project" value="UniProtKB-KW"/>
</dbReference>
<dbReference type="GO" id="GO:0009086">
    <property type="term" value="P:methionine biosynthetic process"/>
    <property type="evidence" value="ECO:0007669"/>
    <property type="project" value="UniProtKB-KW"/>
</dbReference>
<dbReference type="GO" id="GO:0006164">
    <property type="term" value="P:purine nucleotide biosynthetic process"/>
    <property type="evidence" value="ECO:0007669"/>
    <property type="project" value="UniProtKB-KW"/>
</dbReference>
<dbReference type="GO" id="GO:0035999">
    <property type="term" value="P:tetrahydrofolate interconversion"/>
    <property type="evidence" value="ECO:0007669"/>
    <property type="project" value="UniProtKB-UniRule"/>
</dbReference>
<dbReference type="CDD" id="cd01080">
    <property type="entry name" value="NAD_bind_m-THF_DH_Cyclohyd"/>
    <property type="match status" value="1"/>
</dbReference>
<dbReference type="FunFam" id="3.40.50.10860:FF:000001">
    <property type="entry name" value="Bifunctional protein FolD"/>
    <property type="match status" value="1"/>
</dbReference>
<dbReference type="FunFam" id="3.40.50.720:FF:000006">
    <property type="entry name" value="Bifunctional protein FolD"/>
    <property type="match status" value="1"/>
</dbReference>
<dbReference type="Gene3D" id="3.40.50.10860">
    <property type="entry name" value="Leucine Dehydrogenase, chain A, domain 1"/>
    <property type="match status" value="1"/>
</dbReference>
<dbReference type="Gene3D" id="3.40.50.720">
    <property type="entry name" value="NAD(P)-binding Rossmann-like Domain"/>
    <property type="match status" value="1"/>
</dbReference>
<dbReference type="HAMAP" id="MF_01576">
    <property type="entry name" value="THF_DHG_CYH"/>
    <property type="match status" value="1"/>
</dbReference>
<dbReference type="InterPro" id="IPR046346">
    <property type="entry name" value="Aminoacid_DH-like_N_sf"/>
</dbReference>
<dbReference type="InterPro" id="IPR036291">
    <property type="entry name" value="NAD(P)-bd_dom_sf"/>
</dbReference>
<dbReference type="InterPro" id="IPR000672">
    <property type="entry name" value="THF_DH/CycHdrlase"/>
</dbReference>
<dbReference type="InterPro" id="IPR020630">
    <property type="entry name" value="THF_DH/CycHdrlase_cat_dom"/>
</dbReference>
<dbReference type="InterPro" id="IPR020867">
    <property type="entry name" value="THF_DH/CycHdrlase_CS"/>
</dbReference>
<dbReference type="InterPro" id="IPR020631">
    <property type="entry name" value="THF_DH/CycHdrlase_NAD-bd_dom"/>
</dbReference>
<dbReference type="NCBIfam" id="NF008058">
    <property type="entry name" value="PRK10792.1"/>
    <property type="match status" value="1"/>
</dbReference>
<dbReference type="NCBIfam" id="NF010783">
    <property type="entry name" value="PRK14186.1"/>
    <property type="match status" value="1"/>
</dbReference>
<dbReference type="PANTHER" id="PTHR48099:SF5">
    <property type="entry name" value="C-1-TETRAHYDROFOLATE SYNTHASE, CYTOPLASMIC"/>
    <property type="match status" value="1"/>
</dbReference>
<dbReference type="PANTHER" id="PTHR48099">
    <property type="entry name" value="C-1-TETRAHYDROFOLATE SYNTHASE, CYTOPLASMIC-RELATED"/>
    <property type="match status" value="1"/>
</dbReference>
<dbReference type="Pfam" id="PF00763">
    <property type="entry name" value="THF_DHG_CYH"/>
    <property type="match status" value="1"/>
</dbReference>
<dbReference type="Pfam" id="PF02882">
    <property type="entry name" value="THF_DHG_CYH_C"/>
    <property type="match status" value="1"/>
</dbReference>
<dbReference type="PRINTS" id="PR00085">
    <property type="entry name" value="THFDHDRGNASE"/>
</dbReference>
<dbReference type="SUPFAM" id="SSF53223">
    <property type="entry name" value="Aminoacid dehydrogenase-like, N-terminal domain"/>
    <property type="match status" value="1"/>
</dbReference>
<dbReference type="SUPFAM" id="SSF51735">
    <property type="entry name" value="NAD(P)-binding Rossmann-fold domains"/>
    <property type="match status" value="1"/>
</dbReference>
<dbReference type="PROSITE" id="PS00766">
    <property type="entry name" value="THF_DHG_CYH_1"/>
    <property type="match status" value="1"/>
</dbReference>
<dbReference type="PROSITE" id="PS00767">
    <property type="entry name" value="THF_DHG_CYH_2"/>
    <property type="match status" value="1"/>
</dbReference>
<name>FOLD_HAEIE</name>
<feature type="chain" id="PRO_0000305822" description="Bifunctional protein FolD">
    <location>
        <begin position="1"/>
        <end position="282"/>
    </location>
</feature>
<feature type="binding site" evidence="1">
    <location>
        <begin position="166"/>
        <end position="168"/>
    </location>
    <ligand>
        <name>NADP(+)</name>
        <dbReference type="ChEBI" id="CHEBI:58349"/>
    </ligand>
</feature>
<feature type="binding site" evidence="1">
    <location>
        <position position="232"/>
    </location>
    <ligand>
        <name>NADP(+)</name>
        <dbReference type="ChEBI" id="CHEBI:58349"/>
    </ligand>
</feature>
<sequence>MAAKIISGTELSKQIKANLADKITHYIEQGKRAPGLAVILVGADPASQIYVGNKRKSCEEVGILSKSYDLPETTTQNELLAIIDQLNADKNIDGILVQLPLPKQINAEAIIERIDPKKDVDGFHPYNVGRLCQRIPTLRACTPYGVMKLLETTGIDLHGKHAVIVGASNIVGRPMSLELLLAGATVTVTHRFTKNLENHVRQADILVVAVGKPNLISGDWIKESAVVIDVGINRVDGKLVGDVEFDKAAEKAAYITPVPGGVGPMTVAMLMSNTLYAYEHNK</sequence>
<protein>
    <recommendedName>
        <fullName evidence="1">Bifunctional protein FolD</fullName>
    </recommendedName>
    <domain>
        <recommendedName>
            <fullName evidence="1">Methylenetetrahydrofolate dehydrogenase</fullName>
            <ecNumber evidence="1">1.5.1.5</ecNumber>
        </recommendedName>
    </domain>
    <domain>
        <recommendedName>
            <fullName evidence="1">Methenyltetrahydrofolate cyclohydrolase</fullName>
            <ecNumber evidence="1">3.5.4.9</ecNumber>
        </recommendedName>
    </domain>
</protein>
<accession>A5UAS4</accession>